<dbReference type="EC" id="1.5.1.-" evidence="3"/>
<dbReference type="EC" id="1.5.1.5" evidence="2 3"/>
<dbReference type="EMBL" id="L27235">
    <property type="status" value="NOT_ANNOTATED_CDS"/>
    <property type="molecule type" value="Genomic_DNA"/>
</dbReference>
<dbReference type="EMBL" id="CP001510">
    <property type="protein sequence ID" value="ACS39572.1"/>
    <property type="molecule type" value="Genomic_DNA"/>
</dbReference>
<dbReference type="RefSeq" id="WP_003597637.1">
    <property type="nucleotide sequence ID" value="NC_012808.1"/>
</dbReference>
<dbReference type="PDB" id="1LU9">
    <property type="method" value="X-ray"/>
    <property type="resolution" value="1.90 A"/>
    <property type="chains" value="A/B/C=2-288"/>
</dbReference>
<dbReference type="PDB" id="1LUA">
    <property type="method" value="X-ray"/>
    <property type="resolution" value="1.90 A"/>
    <property type="chains" value="A/B/C=2-288"/>
</dbReference>
<dbReference type="PDB" id="6TGE">
    <property type="method" value="X-ray"/>
    <property type="resolution" value="1.50 A"/>
    <property type="chains" value="A/B/C/D/E/F/G/H/I/J/K/L/M/N/O/P/Q/R/S/T/U/V/W/X=1-288"/>
</dbReference>
<dbReference type="PDB" id="6TLK">
    <property type="method" value="X-ray"/>
    <property type="resolution" value="1.80 A"/>
    <property type="chains" value="A/B/C/D/E/F=1-288"/>
</dbReference>
<dbReference type="PDB" id="6TM3">
    <property type="method" value="X-ray"/>
    <property type="resolution" value="1.08 A"/>
    <property type="chains" value="A=1-288"/>
</dbReference>
<dbReference type="PDBsum" id="1LU9"/>
<dbReference type="PDBsum" id="1LUA"/>
<dbReference type="PDBsum" id="6TGE"/>
<dbReference type="PDBsum" id="6TLK"/>
<dbReference type="PDBsum" id="6TM3"/>
<dbReference type="SMR" id="P55818"/>
<dbReference type="STRING" id="272630.MexAM1_META1p1728"/>
<dbReference type="DrugBank" id="DB03461">
    <property type="generic name" value="Nicotinamide adenine dinucleotide phosphate"/>
</dbReference>
<dbReference type="KEGG" id="mea:Mex_1p1728"/>
<dbReference type="eggNOG" id="COG0373">
    <property type="taxonomic scope" value="Bacteria"/>
</dbReference>
<dbReference type="HOGENOM" id="CLU_059363_0_0_5"/>
<dbReference type="OrthoDB" id="6180at2"/>
<dbReference type="BioCyc" id="MetaCyc:MONOMER-3941"/>
<dbReference type="UniPathway" id="UPA00562">
    <property type="reaction ID" value="UER00702"/>
</dbReference>
<dbReference type="EvolutionaryTrace" id="P55818"/>
<dbReference type="Proteomes" id="UP000009081">
    <property type="component" value="Chromosome"/>
</dbReference>
<dbReference type="GO" id="GO:0005737">
    <property type="term" value="C:cytoplasm"/>
    <property type="evidence" value="ECO:0007669"/>
    <property type="project" value="UniProtKB-SubCell"/>
</dbReference>
<dbReference type="GO" id="GO:0004488">
    <property type="term" value="F:methylenetetrahydrofolate dehydrogenase (NADP+) activity"/>
    <property type="evidence" value="ECO:0007669"/>
    <property type="project" value="UniProtKB-EC"/>
</dbReference>
<dbReference type="GO" id="GO:0046294">
    <property type="term" value="P:formaldehyde catabolic process"/>
    <property type="evidence" value="ECO:0007669"/>
    <property type="project" value="UniProtKB-UniPathway"/>
</dbReference>
<dbReference type="GO" id="GO:0006730">
    <property type="term" value="P:one-carbon metabolic process"/>
    <property type="evidence" value="ECO:0007669"/>
    <property type="project" value="UniProtKB-KW"/>
</dbReference>
<dbReference type="CDD" id="cd01078">
    <property type="entry name" value="NAD_bind_H4MPT_DH"/>
    <property type="match status" value="1"/>
</dbReference>
<dbReference type="Gene3D" id="3.40.50.10280">
    <property type="entry name" value="Methylene-tetrahydromethanopterin dehydrogenase, N-terminal domain"/>
    <property type="match status" value="1"/>
</dbReference>
<dbReference type="Gene3D" id="3.40.50.720">
    <property type="entry name" value="NAD(P)-binding Rossmann-like Domain"/>
    <property type="match status" value="1"/>
</dbReference>
<dbReference type="InterPro" id="IPR046346">
    <property type="entry name" value="Aminoacid_DH-like_N_sf"/>
</dbReference>
<dbReference type="InterPro" id="IPR015259">
    <property type="entry name" value="Methyl-teptahyd_DH_N"/>
</dbReference>
<dbReference type="InterPro" id="IPR037089">
    <property type="entry name" value="Methyl-teptahyd_DH_N_sf"/>
</dbReference>
<dbReference type="InterPro" id="IPR036291">
    <property type="entry name" value="NAD(P)-bd_dom_sf"/>
</dbReference>
<dbReference type="InterPro" id="IPR035015">
    <property type="entry name" value="NAD-bd_H4MPT_DH"/>
</dbReference>
<dbReference type="Pfam" id="PF09176">
    <property type="entry name" value="Mpt_N"/>
    <property type="match status" value="1"/>
</dbReference>
<dbReference type="SUPFAM" id="SSF53223">
    <property type="entry name" value="Aminoacid dehydrogenase-like, N-terminal domain"/>
    <property type="match status" value="1"/>
</dbReference>
<dbReference type="SUPFAM" id="SSF51735">
    <property type="entry name" value="NAD(P)-binding Rossmann-fold domains"/>
    <property type="match status" value="1"/>
</dbReference>
<accession>P55818</accession>
<accession>C5B108</accession>
<feature type="initiator methionine" description="Removed" evidence="3">
    <location>
        <position position="1"/>
    </location>
</feature>
<feature type="chain" id="PRO_0000199320" description="Bifunctional protein MdtA">
    <location>
        <begin position="2"/>
        <end position="288"/>
    </location>
</feature>
<feature type="binding site" evidence="1">
    <location>
        <begin position="129"/>
        <end position="132"/>
    </location>
    <ligand>
        <name>NADP(+)</name>
        <dbReference type="ChEBI" id="CHEBI:58349"/>
    </ligand>
</feature>
<feature type="binding site" evidence="1">
    <location>
        <begin position="152"/>
        <end position="156"/>
    </location>
    <ligand>
        <name>NADP(+)</name>
        <dbReference type="ChEBI" id="CHEBI:58349"/>
    </ligand>
</feature>
<feature type="binding site" evidence="1">
    <location>
        <begin position="195"/>
        <end position="198"/>
    </location>
    <ligand>
        <name>NADP(+)</name>
        <dbReference type="ChEBI" id="CHEBI:58349"/>
    </ligand>
</feature>
<feature type="binding site" evidence="1">
    <location>
        <position position="256"/>
    </location>
    <ligand>
        <name>NADP(+)</name>
        <dbReference type="ChEBI" id="CHEBI:58349"/>
    </ligand>
</feature>
<feature type="strand" evidence="7">
    <location>
        <begin position="5"/>
        <end position="14"/>
    </location>
</feature>
<feature type="helix" evidence="7">
    <location>
        <begin position="17"/>
        <end position="25"/>
    </location>
</feature>
<feature type="strand" evidence="7">
    <location>
        <begin position="29"/>
        <end position="34"/>
    </location>
</feature>
<feature type="turn" evidence="7">
    <location>
        <begin position="39"/>
        <end position="41"/>
    </location>
</feature>
<feature type="helix" evidence="7">
    <location>
        <begin position="42"/>
        <end position="50"/>
    </location>
</feature>
<feature type="helix" evidence="7">
    <location>
        <begin position="55"/>
        <end position="60"/>
    </location>
</feature>
<feature type="strand" evidence="7">
    <location>
        <begin position="61"/>
        <end position="66"/>
    </location>
</feature>
<feature type="helix" evidence="7">
    <location>
        <begin position="70"/>
        <end position="83"/>
    </location>
</feature>
<feature type="strand" evidence="7">
    <location>
        <begin position="91"/>
        <end position="94"/>
    </location>
</feature>
<feature type="helix" evidence="7">
    <location>
        <begin position="96"/>
        <end position="98"/>
    </location>
</feature>
<feature type="helix" evidence="7">
    <location>
        <begin position="99"/>
        <end position="113"/>
    </location>
</feature>
<feature type="strand" evidence="7">
    <location>
        <begin position="122"/>
        <end position="126"/>
    </location>
</feature>
<feature type="turn" evidence="7">
    <location>
        <begin position="127"/>
        <end position="129"/>
    </location>
</feature>
<feature type="helix" evidence="7">
    <location>
        <begin position="131"/>
        <end position="142"/>
    </location>
</feature>
<feature type="strand" evidence="7">
    <location>
        <begin position="146"/>
        <end position="153"/>
    </location>
</feature>
<feature type="helix" evidence="7">
    <location>
        <begin position="154"/>
        <end position="168"/>
    </location>
</feature>
<feature type="strand" evidence="7">
    <location>
        <begin position="173"/>
        <end position="176"/>
    </location>
</feature>
<feature type="helix" evidence="7">
    <location>
        <begin position="180"/>
        <end position="186"/>
    </location>
</feature>
<feature type="turn" evidence="7">
    <location>
        <begin position="187"/>
        <end position="189"/>
    </location>
</feature>
<feature type="strand" evidence="7">
    <location>
        <begin position="191"/>
        <end position="195"/>
    </location>
</feature>
<feature type="helix" evidence="7">
    <location>
        <begin position="206"/>
        <end position="208"/>
    </location>
</feature>
<feature type="turn" evidence="7">
    <location>
        <begin position="209"/>
        <end position="211"/>
    </location>
</feature>
<feature type="strand" evidence="7">
    <location>
        <begin position="217"/>
        <end position="220"/>
    </location>
</feature>
<feature type="strand" evidence="7">
    <location>
        <begin position="224"/>
        <end position="226"/>
    </location>
</feature>
<feature type="strand" evidence="7">
    <location>
        <begin position="237"/>
        <end position="241"/>
    </location>
</feature>
<feature type="strand" evidence="7">
    <location>
        <begin position="244"/>
        <end position="247"/>
    </location>
</feature>
<feature type="helix" evidence="7">
    <location>
        <begin position="249"/>
        <end position="267"/>
    </location>
</feature>
<feature type="strand" evidence="7">
    <location>
        <begin position="274"/>
        <end position="276"/>
    </location>
</feature>
<feature type="helix" evidence="7">
    <location>
        <begin position="277"/>
        <end position="288"/>
    </location>
</feature>
<sequence length="288" mass="29736">MSKKLLFQFDTDATPSVFDVVVGYDGGADHITGYGNVTPDNVGAYVDGTIYTRGGKEKQSTAIFVGGGDMAAGERVFEAVKKRFFGPFRVSCMLDSNGSNTTAAAGVALVVKAAGGSVKGKKAVVLAGTGPVGMRSAALLAGEGAEVVLCGRKLDKAQAAADSVNKRFKVNVTAAETADDASRAEAVKGAHFVFTAGAIGLELLPQAAWQNESSIEIVADYNAQPPLGIGGIDATDKGKEYGGKRAFGALGIGGLKLKLHRACIAKLFESSEGVFDAEEIYKLAKEMA</sequence>
<proteinExistence type="evidence at protein level"/>
<name>MTDA_METEA</name>
<organism>
    <name type="scientific">Methylorubrum extorquens (strain ATCC 14718 / DSM 1338 / JCM 2805 / NCIMB 9133 / AM1)</name>
    <name type="common">Methylobacterium extorquens</name>
    <dbReference type="NCBI Taxonomy" id="272630"/>
    <lineage>
        <taxon>Bacteria</taxon>
        <taxon>Pseudomonadati</taxon>
        <taxon>Pseudomonadota</taxon>
        <taxon>Alphaproteobacteria</taxon>
        <taxon>Hyphomicrobiales</taxon>
        <taxon>Methylobacteriaceae</taxon>
        <taxon>Methylorubrum</taxon>
    </lineage>
</organism>
<comment type="function">
    <text evidence="3">Catalyzes the dehydrogenation of methylene-H(4)MPT. Can also catalyze the reversible dehydrogenation of methylene-H(4)F with 20-fold lower catalytic efficiency.</text>
</comment>
<comment type="catalytic activity">
    <reaction evidence="3">
        <text>5,10-methylenetetrahydromethanopterin + NADP(+) = 5,10-methenyl-5,6,7,8-tetrahydromethanopterin + NADPH</text>
        <dbReference type="Rhea" id="RHEA:24682"/>
        <dbReference type="ChEBI" id="CHEBI:57783"/>
        <dbReference type="ChEBI" id="CHEBI:57818"/>
        <dbReference type="ChEBI" id="CHEBI:58337"/>
        <dbReference type="ChEBI" id="CHEBI:58349"/>
    </reaction>
</comment>
<comment type="catalytic activity">
    <reaction evidence="2 3">
        <text>(6R)-5,10-methylene-5,6,7,8-tetrahydrofolate + NADP(+) = (6R)-5,10-methenyltetrahydrofolate + NADPH</text>
        <dbReference type="Rhea" id="RHEA:22812"/>
        <dbReference type="ChEBI" id="CHEBI:15636"/>
        <dbReference type="ChEBI" id="CHEBI:57455"/>
        <dbReference type="ChEBI" id="CHEBI:57783"/>
        <dbReference type="ChEBI" id="CHEBI:58349"/>
        <dbReference type="EC" id="1.5.1.5"/>
    </reaction>
</comment>
<comment type="biophysicochemical properties">
    <kinetics>
        <KM evidence="3">20 mM for methylenetetrahydromethanopterin</KM>
        <KM evidence="3">30 mM for methylenetetrahydrofolate</KM>
        <KM evidence="3">30 mM for NADP(+) (in the presence of methylenetetrahydromethanopterin)</KM>
        <KM evidence="3">10 mM for NADP(+) (in the presence of methylenetetrahydrofolate)</KM>
        <Vmax evidence="3">600.0 umol/min/mg enzyme with methylenetetrahydromethanopterin as substrate</Vmax>
        <Vmax evidence="3">30.0 umol/min/mg enzyme with methylenetetrahydrofolate as substrate</Vmax>
    </kinetics>
    <phDependence>
        <text evidence="3">Optimum pH is 6.0.</text>
    </phDependence>
    <temperatureDependence>
        <text evidence="3">Optimum temperature is 45 degrees Celsius.</text>
    </temperatureDependence>
</comment>
<comment type="pathway">
    <text evidence="3">One-carbon metabolism; formaldehyde degradation; formate from formaldehyde (H(4)MPT route): step 2/5.</text>
</comment>
<comment type="subunit">
    <text evidence="1">Homotrimer.</text>
</comment>
<comment type="subcellular location">
    <subcellularLocation>
        <location evidence="6">Cytoplasm</location>
    </subcellularLocation>
</comment>
<evidence type="ECO:0000269" key="1">
    <source>
    </source>
</evidence>
<evidence type="ECO:0000269" key="2">
    <source>
    </source>
</evidence>
<evidence type="ECO:0000269" key="3">
    <source>
    </source>
</evidence>
<evidence type="ECO:0000303" key="4">
    <source>
    </source>
</evidence>
<evidence type="ECO:0000303" key="5">
    <source>
    </source>
</evidence>
<evidence type="ECO:0000305" key="6"/>
<evidence type="ECO:0007829" key="7">
    <source>
        <dbReference type="PDB" id="6TM3"/>
    </source>
</evidence>
<keyword id="KW-0002">3D-structure</keyword>
<keyword id="KW-0963">Cytoplasm</keyword>
<keyword id="KW-0903">Direct protein sequencing</keyword>
<keyword id="KW-0521">NADP</keyword>
<keyword id="KW-0554">One-carbon metabolism</keyword>
<keyword id="KW-0560">Oxidoreductase</keyword>
<keyword id="KW-1185">Reference proteome</keyword>
<reference key="1">
    <citation type="journal article" date="1994" name="J. Bacteriol.">
        <title>Genetics of the serine cycle in Methylobacterium extorquens AM1: identification of sgaA and mtdA and sequences of sgaA, hprA, and mtdA.</title>
        <authorList>
            <person name="Chistoserdova L.V."/>
            <person name="Lidstrom M.E."/>
        </authorList>
    </citation>
    <scope>NUCLEOTIDE SEQUENCE [GENOMIC DNA]</scope>
    <scope>CATALYTIC ACTIVITY</scope>
    <source>
        <strain>ATCC 14718 / DSM 1338 / JCM 2805 / NCIMB 9133 / AM1</strain>
    </source>
</reference>
<reference key="2">
    <citation type="journal article" date="2009" name="PLoS ONE">
        <title>Methylobacterium genome sequences: a reference blueprint to investigate microbial metabolism of C1 compounds from natural and industrial sources.</title>
        <authorList>
            <person name="Vuilleumier S."/>
            <person name="Chistoserdova L."/>
            <person name="Lee M.-C."/>
            <person name="Bringel F."/>
            <person name="Lajus A."/>
            <person name="Zhou Y."/>
            <person name="Gourion B."/>
            <person name="Barbe V."/>
            <person name="Chang J."/>
            <person name="Cruveiller S."/>
            <person name="Dossat C."/>
            <person name="Gillett W."/>
            <person name="Gruffaz C."/>
            <person name="Haugen E."/>
            <person name="Hourcade E."/>
            <person name="Levy R."/>
            <person name="Mangenot S."/>
            <person name="Muller E."/>
            <person name="Nadalig T."/>
            <person name="Pagni M."/>
            <person name="Penny C."/>
            <person name="Peyraud R."/>
            <person name="Robinson D.G."/>
            <person name="Roche D."/>
            <person name="Rouy Z."/>
            <person name="Saenampechek C."/>
            <person name="Salvignol G."/>
            <person name="Vallenet D."/>
            <person name="Wu Z."/>
            <person name="Marx C.J."/>
            <person name="Vorholt J.A."/>
            <person name="Olson M.V."/>
            <person name="Kaul R."/>
            <person name="Weissenbach J."/>
            <person name="Medigue C."/>
            <person name="Lidstrom M.E."/>
        </authorList>
    </citation>
    <scope>NUCLEOTIDE SEQUENCE [LARGE SCALE GENOMIC DNA]</scope>
    <source>
        <strain>ATCC 14718 / DSM 1338 / JCM 2805 / NCIMB 9133 / AM1</strain>
    </source>
</reference>
<reference key="3">
    <citation type="journal article" date="1998" name="J. Bacteriol.">
        <title>The NADP-dependent methylene tetrahydromethanopterin dehydrogenase in Methylobacterium extorquens AM1.</title>
        <authorList>
            <person name="Vorholt J.A."/>
            <person name="Chistoserdova L.V."/>
            <person name="Lidstrom M.E."/>
            <person name="Thauer R.K."/>
        </authorList>
    </citation>
    <scope>PROTEIN SEQUENCE OF 2-21</scope>
    <scope>FUNCTION</scope>
    <scope>CATALYTIC ACTIVITY</scope>
    <scope>BIOPHYSICOCHEMICAL PROPERTIES</scope>
    <scope>PATHWAY</scope>
</reference>
<reference key="4">
    <citation type="journal article" date="2001" name="FEBS Lett.">
        <title>Re-face stereospecificity of NADP dependent methylenetetrahydromethanopterin dehydrogenase from Methylobacterium extorquens AM1 as determined by NMR spectroscopy.</title>
        <authorList>
            <person name="Hagemeier C.H."/>
            <person name="Bartoschek S."/>
            <person name="Griesinger C."/>
            <person name="Thauer R.K."/>
            <person name="Vorholt J.A."/>
        </authorList>
    </citation>
    <scope>STRUCTURE BY NMR IN COMPLEX WITH NADP</scope>
    <scope>SUBUNIT</scope>
</reference>
<protein>
    <recommendedName>
        <fullName evidence="6">Bifunctional protein MdtA</fullName>
    </recommendedName>
    <domain>
        <recommendedName>
            <fullName evidence="5">NADP-dependent methylenetetrahydromethanopterin dehydrogenase</fullName>
            <ecNumber evidence="3">1.5.1.-</ecNumber>
        </recommendedName>
    </domain>
    <domain>
        <recommendedName>
            <fullName evidence="4">Methylenetetrahydrofolate dehydrogenase</fullName>
            <ecNumber evidence="2 3">1.5.1.5</ecNumber>
        </recommendedName>
    </domain>
</protein>
<gene>
    <name evidence="4" type="primary">mtdA</name>
    <name type="ordered locus">MexAM1_META1p1728</name>
</gene>